<comment type="function">
    <text evidence="1">GTPase that plays an essential role in the late steps of ribosome biogenesis.</text>
</comment>
<comment type="subunit">
    <text evidence="1">Associates with the 50S ribosomal subunit.</text>
</comment>
<comment type="similarity">
    <text evidence="1">Belongs to the TRAFAC class TrmE-Era-EngA-EngB-Septin-like GTPase superfamily. EngA (Der) GTPase family.</text>
</comment>
<gene>
    <name evidence="1" type="primary">der</name>
    <name type="synonym">engA</name>
    <name type="ordered locus">BARBAKC583_0374</name>
</gene>
<accession>A1URU0</accession>
<dbReference type="EMBL" id="CP000524">
    <property type="protein sequence ID" value="ABM45486.1"/>
    <property type="molecule type" value="Genomic_DNA"/>
</dbReference>
<dbReference type="RefSeq" id="WP_005766360.1">
    <property type="nucleotide sequence ID" value="NC_008783.1"/>
</dbReference>
<dbReference type="SMR" id="A1URU0"/>
<dbReference type="STRING" id="360095.BARBAKC583_0374"/>
<dbReference type="GeneID" id="4684496"/>
<dbReference type="KEGG" id="bbk:BARBAKC583_0374"/>
<dbReference type="PATRIC" id="fig|360095.6.peg.357"/>
<dbReference type="eggNOG" id="COG1160">
    <property type="taxonomic scope" value="Bacteria"/>
</dbReference>
<dbReference type="HOGENOM" id="CLU_016077_5_0_5"/>
<dbReference type="OrthoDB" id="9805918at2"/>
<dbReference type="Proteomes" id="UP000000643">
    <property type="component" value="Chromosome"/>
</dbReference>
<dbReference type="GO" id="GO:0005525">
    <property type="term" value="F:GTP binding"/>
    <property type="evidence" value="ECO:0007669"/>
    <property type="project" value="UniProtKB-UniRule"/>
</dbReference>
<dbReference type="GO" id="GO:0042254">
    <property type="term" value="P:ribosome biogenesis"/>
    <property type="evidence" value="ECO:0007669"/>
    <property type="project" value="UniProtKB-KW"/>
</dbReference>
<dbReference type="CDD" id="cd01894">
    <property type="entry name" value="EngA1"/>
    <property type="match status" value="1"/>
</dbReference>
<dbReference type="CDD" id="cd01895">
    <property type="entry name" value="EngA2"/>
    <property type="match status" value="1"/>
</dbReference>
<dbReference type="FunFam" id="3.30.300.20:FF:000004">
    <property type="entry name" value="GTPase Der"/>
    <property type="match status" value="1"/>
</dbReference>
<dbReference type="FunFam" id="3.40.50.300:FF:000057">
    <property type="entry name" value="GTPase Der"/>
    <property type="match status" value="1"/>
</dbReference>
<dbReference type="Gene3D" id="3.30.300.20">
    <property type="match status" value="1"/>
</dbReference>
<dbReference type="Gene3D" id="3.40.50.300">
    <property type="entry name" value="P-loop containing nucleotide triphosphate hydrolases"/>
    <property type="match status" value="2"/>
</dbReference>
<dbReference type="HAMAP" id="MF_00195">
    <property type="entry name" value="GTPase_Der"/>
    <property type="match status" value="1"/>
</dbReference>
<dbReference type="InterPro" id="IPR031166">
    <property type="entry name" value="G_ENGA"/>
</dbReference>
<dbReference type="InterPro" id="IPR006073">
    <property type="entry name" value="GTP-bd"/>
</dbReference>
<dbReference type="InterPro" id="IPR016484">
    <property type="entry name" value="GTPase_Der"/>
</dbReference>
<dbReference type="InterPro" id="IPR032859">
    <property type="entry name" value="KH_dom-like"/>
</dbReference>
<dbReference type="InterPro" id="IPR015946">
    <property type="entry name" value="KH_dom-like_a/b"/>
</dbReference>
<dbReference type="InterPro" id="IPR027417">
    <property type="entry name" value="P-loop_NTPase"/>
</dbReference>
<dbReference type="InterPro" id="IPR005225">
    <property type="entry name" value="Small_GTP-bd"/>
</dbReference>
<dbReference type="NCBIfam" id="TIGR03594">
    <property type="entry name" value="GTPase_EngA"/>
    <property type="match status" value="1"/>
</dbReference>
<dbReference type="NCBIfam" id="TIGR00231">
    <property type="entry name" value="small_GTP"/>
    <property type="match status" value="2"/>
</dbReference>
<dbReference type="PANTHER" id="PTHR43834">
    <property type="entry name" value="GTPASE DER"/>
    <property type="match status" value="1"/>
</dbReference>
<dbReference type="PANTHER" id="PTHR43834:SF6">
    <property type="entry name" value="GTPASE DER"/>
    <property type="match status" value="1"/>
</dbReference>
<dbReference type="Pfam" id="PF14714">
    <property type="entry name" value="KH_dom-like"/>
    <property type="match status" value="1"/>
</dbReference>
<dbReference type="Pfam" id="PF01926">
    <property type="entry name" value="MMR_HSR1"/>
    <property type="match status" value="2"/>
</dbReference>
<dbReference type="PIRSF" id="PIRSF006485">
    <property type="entry name" value="GTP-binding_EngA"/>
    <property type="match status" value="1"/>
</dbReference>
<dbReference type="PRINTS" id="PR00326">
    <property type="entry name" value="GTP1OBG"/>
</dbReference>
<dbReference type="SUPFAM" id="SSF52540">
    <property type="entry name" value="P-loop containing nucleoside triphosphate hydrolases"/>
    <property type="match status" value="2"/>
</dbReference>
<dbReference type="PROSITE" id="PS51712">
    <property type="entry name" value="G_ENGA"/>
    <property type="match status" value="2"/>
</dbReference>
<reference key="1">
    <citation type="submission" date="2006-12" db="EMBL/GenBank/DDBJ databases">
        <authorList>
            <person name="Hendrix L."/>
            <person name="Mohamoud Y."/>
            <person name="Radune D."/>
            <person name="Shvartsbeyn A."/>
            <person name="Daugherty S."/>
            <person name="Dodson R."/>
            <person name="Durkin A.S."/>
            <person name="Harkins D."/>
            <person name="Huot H."/>
            <person name="Kothari S.P."/>
            <person name="Madupu R."/>
            <person name="Li J."/>
            <person name="Nelson W.C."/>
            <person name="Shrivastava S."/>
            <person name="Giglio M.G."/>
            <person name="Haft D."/>
            <person name="Selengut J."/>
            <person name="Fraser-Ligget C."/>
            <person name="Seshadri R."/>
        </authorList>
    </citation>
    <scope>NUCLEOTIDE SEQUENCE [LARGE SCALE GENOMIC DNA]</scope>
    <source>
        <strain>ATCC 35685 / KC583 / Herrer 020/F12,63</strain>
    </source>
</reference>
<protein>
    <recommendedName>
        <fullName evidence="1">GTPase Der</fullName>
    </recommendedName>
    <alternativeName>
        <fullName evidence="1">GTP-binding protein EngA</fullName>
    </alternativeName>
</protein>
<keyword id="KW-0342">GTP-binding</keyword>
<keyword id="KW-0547">Nucleotide-binding</keyword>
<keyword id="KW-0677">Repeat</keyword>
<keyword id="KW-0690">Ribosome biogenesis</keyword>
<proteinExistence type="inferred from homology"/>
<evidence type="ECO:0000255" key="1">
    <source>
        <dbReference type="HAMAP-Rule" id="MF_00195"/>
    </source>
</evidence>
<sequence>MSLTIAIVGRPNVGKSTLFNRLVGKKLALVDDKPGVTRDRRIHAARFQDLYFDVIDTAGLEEADDHTLEGRMRSQTKVAIDEADLILFVLDAKSGITSSDLNFASLVRKSEKPIVLVANKSESKAATEGKYEAWSLGLGEPCAISAEHGLGLSDLRDAIVDAVGKDKAFDNKKEEDTIIQSASVGDNGDDLEEEGCIYDESAPIRIAIAGRPNTGKSTLINSMLGQDRLLTGPEAGVTRDSISIDWEWRSRHIKLFDTAGLRRKSKIQEKLEKLSVTDTLRAIRFAEVVVIVFDSTAPFEKQDLQIVDLVIREGRVPIIAFNKWDLIENCQEILADLHEKCACLLPQVRGLRAVPLSGQYGQGIDKLMENITMIHRIWNRRISTGKLNRWLETVVTRHPPPAISGRRLKVKYITQIKTRPPGFMISCSRPEVMPQSYLRYLSNGLRDAFDMPGVPIRLSLRTSDNPFVGSAKK</sequence>
<name>DER_BARBK</name>
<feature type="chain" id="PRO_1000011567" description="GTPase Der">
    <location>
        <begin position="1"/>
        <end position="473"/>
    </location>
</feature>
<feature type="domain" description="EngA-type G 1">
    <location>
        <begin position="3"/>
        <end position="167"/>
    </location>
</feature>
<feature type="domain" description="EngA-type G 2">
    <location>
        <begin position="204"/>
        <end position="379"/>
    </location>
</feature>
<feature type="domain" description="KH-like" evidence="1">
    <location>
        <begin position="380"/>
        <end position="464"/>
    </location>
</feature>
<feature type="binding site" evidence="1">
    <location>
        <begin position="9"/>
        <end position="16"/>
    </location>
    <ligand>
        <name>GTP</name>
        <dbReference type="ChEBI" id="CHEBI:37565"/>
        <label>1</label>
    </ligand>
</feature>
<feature type="binding site" evidence="1">
    <location>
        <begin position="56"/>
        <end position="60"/>
    </location>
    <ligand>
        <name>GTP</name>
        <dbReference type="ChEBI" id="CHEBI:37565"/>
        <label>1</label>
    </ligand>
</feature>
<feature type="binding site" evidence="1">
    <location>
        <begin position="119"/>
        <end position="122"/>
    </location>
    <ligand>
        <name>GTP</name>
        <dbReference type="ChEBI" id="CHEBI:37565"/>
        <label>1</label>
    </ligand>
</feature>
<feature type="binding site" evidence="1">
    <location>
        <begin position="210"/>
        <end position="217"/>
    </location>
    <ligand>
        <name>GTP</name>
        <dbReference type="ChEBI" id="CHEBI:37565"/>
        <label>2</label>
    </ligand>
</feature>
<feature type="binding site" evidence="1">
    <location>
        <begin position="257"/>
        <end position="261"/>
    </location>
    <ligand>
        <name>GTP</name>
        <dbReference type="ChEBI" id="CHEBI:37565"/>
        <label>2</label>
    </ligand>
</feature>
<feature type="binding site" evidence="1">
    <location>
        <begin position="322"/>
        <end position="325"/>
    </location>
    <ligand>
        <name>GTP</name>
        <dbReference type="ChEBI" id="CHEBI:37565"/>
        <label>2</label>
    </ligand>
</feature>
<organism>
    <name type="scientific">Bartonella bacilliformis (strain ATCC 35685 / KC583 / Herrer 020/F12,63)</name>
    <dbReference type="NCBI Taxonomy" id="360095"/>
    <lineage>
        <taxon>Bacteria</taxon>
        <taxon>Pseudomonadati</taxon>
        <taxon>Pseudomonadota</taxon>
        <taxon>Alphaproteobacteria</taxon>
        <taxon>Hyphomicrobiales</taxon>
        <taxon>Bartonellaceae</taxon>
        <taxon>Bartonella</taxon>
    </lineage>
</organism>